<comment type="function">
    <text evidence="2">Calcium-binding protein that interacts with rotavirus cell receptors once the initial attachment by VP4 has been achieved. Rotavirus attachment and entry into the host cell probably involves multiple sequential contacts between the outer capsid proteins VP4 and VP7, and the cell receptors. Following entry into the host cell, low intracellular or intravesicular Ca(2+) concentration probably causes the calcium-stabilized VP7 trimers to dissociate from the virion. This step is probably necessary for the membrane-disrupting entry step and the release of VP4, which is locked onto the virion by VP7.</text>
</comment>
<comment type="subunit">
    <text evidence="2">Homotrimer; disulfide-linked. 2 Ca(2+) ions bound at each subunit interface in the trimer hold the trimer together. Interacts with the intermediate capsid protein VP6. Interacts with the outer capsid protein VP5*.</text>
</comment>
<comment type="subcellular location">
    <subcellularLocation>
        <location evidence="2">Virion</location>
    </subcellularLocation>
    <subcellularLocation>
        <location evidence="2">Host endoplasmic reticulum lumen</location>
    </subcellularLocation>
    <text evidence="2">The outer layer contains 780 copies of VP7, grouped as 260 trimers. Immature double-layered particles assembled in the cytoplasm bud across the membrane of the endoplasmic reticulum, acquiring during this process a transient lipid membrane that is modified with the ER resident viral glycoproteins NSP4 and VP7; these enveloped particles also contain VP4. As the particles move towards the interior of the ER cisternae, the transient lipid membrane and the non-structural protein NSP4 are lost, while the virus surface proteins VP4 and VP7 rearrange to form the outermost virus protein layer, yielding mature infectious triple-layered particles.</text>
</comment>
<comment type="alternative products">
    <event type="alternative initiation"/>
    <isoform>
        <id>P08406-1</id>
        <name>1</name>
        <sequence type="displayed"/>
    </isoform>
    <isoform>
        <id>P08406-2</id>
        <name>2</name>
        <sequence type="described" ref="VSP_038638"/>
    </isoform>
</comment>
<comment type="PTM">
    <text evidence="2">N-glycosylated.</text>
</comment>
<comment type="PTM">
    <text evidence="2">The N-terminus is blocked possibly by pyroglutamic acid.</text>
</comment>
<comment type="miscellaneous">
    <text evidence="2">Some rotavirus strains are neuraminidase-sensitive and require sialic acid to attach to the cell surface. Some rotavirus strains are integrin-dependent. Some rotavirus strains depend on ganglioside for their entry into the host cell. Hsp70 also seems to be involved in the entry of some strains.</text>
</comment>
<comment type="miscellaneous">
    <text evidence="2">In group A rotaviruses, VP7 defines the G serotype.</text>
</comment>
<comment type="miscellaneous">
    <molecule>Isoform 2</molecule>
    <text evidence="3">Produced by alternative initiation at Met-30 of isoform 1.</text>
</comment>
<comment type="similarity">
    <text evidence="2">Belongs to the rotavirus VP7 family.</text>
</comment>
<comment type="sequence caution" evidence="3">
    <conflict type="erroneous initiation">
        <sequence resource="EMBL-CDS" id="CAA28284"/>
    </conflict>
</comment>
<dbReference type="EMBL" id="X04613">
    <property type="protein sequence ID" value="CAA28283.1"/>
    <property type="molecule type" value="Genomic_RNA"/>
</dbReference>
<dbReference type="EMBL" id="X04613">
    <property type="protein sequence ID" value="CAA28284.1"/>
    <property type="status" value="ALT_INIT"/>
    <property type="molecule type" value="Genomic_RNA"/>
</dbReference>
<dbReference type="PIR" id="A29151">
    <property type="entry name" value="VGXRPR"/>
</dbReference>
<dbReference type="SMR" id="P08406"/>
<dbReference type="GO" id="GO:0044166">
    <property type="term" value="C:host cell endoplasmic reticulum lumen"/>
    <property type="evidence" value="ECO:0007669"/>
    <property type="project" value="UniProtKB-SubCell"/>
</dbReference>
<dbReference type="GO" id="GO:0039621">
    <property type="term" value="C:T=13 icosahedral viral capsid"/>
    <property type="evidence" value="ECO:0007669"/>
    <property type="project" value="UniProtKB-UniRule"/>
</dbReference>
<dbReference type="GO" id="GO:0039624">
    <property type="term" value="C:viral outer capsid"/>
    <property type="evidence" value="ECO:0007669"/>
    <property type="project" value="UniProtKB-UniRule"/>
</dbReference>
<dbReference type="GO" id="GO:0046872">
    <property type="term" value="F:metal ion binding"/>
    <property type="evidence" value="ECO:0007669"/>
    <property type="project" value="UniProtKB-KW"/>
</dbReference>
<dbReference type="Gene3D" id="3.40.50.11130">
    <property type="entry name" value="Glycoprotein VP7, domain 1"/>
    <property type="match status" value="1"/>
</dbReference>
<dbReference type="Gene3D" id="2.60.120.800">
    <property type="entry name" value="Rotavirus outer-layer protein VP7, domain 2"/>
    <property type="match status" value="1"/>
</dbReference>
<dbReference type="HAMAP" id="MF_04130">
    <property type="entry name" value="Rota_VP7"/>
    <property type="match status" value="1"/>
</dbReference>
<dbReference type="HAMAP" id="MF_04131">
    <property type="entry name" value="Rota_VP7_A"/>
    <property type="match status" value="1"/>
</dbReference>
<dbReference type="InterPro" id="IPR001963">
    <property type="entry name" value="VP7"/>
</dbReference>
<dbReference type="InterPro" id="IPR042207">
    <property type="entry name" value="VP7_1"/>
</dbReference>
<dbReference type="InterPro" id="IPR042210">
    <property type="entry name" value="VP7_2"/>
</dbReference>
<dbReference type="Pfam" id="PF00434">
    <property type="entry name" value="VP7"/>
    <property type="match status" value="1"/>
</dbReference>
<reference key="1">
    <citation type="journal article" date="1986" name="J. Gen. Virol.">
        <title>VP7 serotype-specific glycoprotein of OSU porcine rotavirus: coding assignment and gene sequence.</title>
        <authorList>
            <person name="Gorziglia M."/>
            <person name="Aguirre Y."/>
            <person name="Hoshino Y."/>
            <person name="Esparza J."/>
            <person name="Blumentals I."/>
            <person name="Askaa J."/>
            <person name="Thompson M."/>
            <person name="Glass R.I."/>
            <person name="Kapikian A.Z."/>
            <person name="Chanock R.M."/>
        </authorList>
    </citation>
    <scope>NUCLEOTIDE SEQUENCE [GENOMIC RNA]</scope>
</reference>
<accession>P08406</accession>
<accession>Q86213</accession>
<name>VP7_ROTP5</name>
<keyword id="KW-0024">Alternative initiation</keyword>
<keyword id="KW-0106">Calcium</keyword>
<keyword id="KW-0167">Capsid protein</keyword>
<keyword id="KW-1015">Disulfide bond</keyword>
<keyword id="KW-0325">Glycoprotein</keyword>
<keyword id="KW-1038">Host endoplasmic reticulum</keyword>
<keyword id="KW-0945">Host-virus interaction</keyword>
<keyword id="KW-0479">Metal-binding</keyword>
<keyword id="KW-1152">Outer capsid protein</keyword>
<keyword id="KW-0732">Signal</keyword>
<keyword id="KW-1146">T=13 icosahedral capsid protein</keyword>
<keyword id="KW-0946">Virion</keyword>
<evidence type="ECO:0000255" key="1"/>
<evidence type="ECO:0000255" key="2">
    <source>
        <dbReference type="HAMAP-Rule" id="MF_04131"/>
    </source>
</evidence>
<evidence type="ECO:0000305" key="3"/>
<organismHost>
    <name type="scientific">Sus scrofa</name>
    <name type="common">Pig</name>
    <dbReference type="NCBI Taxonomy" id="9823"/>
</organismHost>
<sequence>MYGIEYTTVLTFLISLVFVNYILKSVTRTMDFIIYRFLLVIVVLAPLIKAQNYGINLPITGSMDTPYMNSTTSETFLTSTLCLYYPNEAATEIADTKWTETLSQLFLTKGWPTGSVYFKGYADIASFSVEPQLYCDYNIVLMKYDGNLQLDMSELAGLILNEWLCNPMDIMLYYYQQTDEANKWISMGTSCTIKVCPLNTQTLGIGCSTTDINSFETVANAEKLAITDVVDGVNHKLDVTTSTCTIRNCKKLGPRENVAVIQVGGPNILDITADPTTAPQTERMMRINWKRWWQVFYTIVDYVNQIVQVMSKRSRSLDSAAFYYRV</sequence>
<feature type="signal peptide" evidence="2">
    <location>
        <begin position="1"/>
        <end position="50"/>
    </location>
</feature>
<feature type="chain" id="PRO_0000149614" description="Outer capsid glycoprotein VP7" evidence="2">
    <location>
        <begin position="51"/>
        <end position="326"/>
    </location>
</feature>
<feature type="region of interest" description="CNP motif; interaction with ITGAV/ITGB3" evidence="2">
    <location>
        <begin position="165"/>
        <end position="167"/>
    </location>
</feature>
<feature type="region of interest" description="LVD motif; interaction with ITGA4/ITGB1 heterodimer" evidence="2">
    <location>
        <begin position="237"/>
        <end position="239"/>
    </location>
</feature>
<feature type="region of interest" description="GPR motif; interaction with ITGAX/ITGB2" evidence="2">
    <location>
        <begin position="253"/>
        <end position="255"/>
    </location>
</feature>
<feature type="binding site" evidence="2">
    <location>
        <position position="95"/>
    </location>
    <ligand>
        <name>Ca(2+)</name>
        <dbReference type="ChEBI" id="CHEBI:29108"/>
        <label>1</label>
    </ligand>
</feature>
<feature type="binding site" evidence="2">
    <location>
        <position position="177"/>
    </location>
    <ligand>
        <name>Ca(2+)</name>
        <dbReference type="ChEBI" id="CHEBI:29108"/>
        <label>2</label>
    </ligand>
</feature>
<feature type="binding site" evidence="2">
    <location>
        <position position="206"/>
    </location>
    <ligand>
        <name>Ca(2+)</name>
        <dbReference type="ChEBI" id="CHEBI:29108"/>
        <label>1</label>
    </ligand>
</feature>
<feature type="binding site" evidence="2">
    <location>
        <position position="214"/>
    </location>
    <ligand>
        <name>Ca(2+)</name>
        <dbReference type="ChEBI" id="CHEBI:29108"/>
        <label>1</label>
    </ligand>
</feature>
<feature type="binding site" evidence="2">
    <location>
        <position position="216"/>
    </location>
    <ligand>
        <name>Ca(2+)</name>
        <dbReference type="ChEBI" id="CHEBI:29108"/>
        <label>1</label>
    </ligand>
</feature>
<feature type="binding site" evidence="2">
    <location>
        <position position="228"/>
    </location>
    <ligand>
        <name>Ca(2+)</name>
        <dbReference type="ChEBI" id="CHEBI:29108"/>
        <label>2</label>
    </ligand>
</feature>
<feature type="binding site" evidence="2">
    <location>
        <position position="229"/>
    </location>
    <ligand>
        <name>Ca(2+)</name>
        <dbReference type="ChEBI" id="CHEBI:29108"/>
        <label>2</label>
    </ligand>
</feature>
<feature type="binding site" evidence="2">
    <location>
        <position position="231"/>
    </location>
    <ligand>
        <name>Ca(2+)</name>
        <dbReference type="ChEBI" id="CHEBI:29108"/>
        <label>2</label>
    </ligand>
</feature>
<feature type="binding site" evidence="2">
    <location>
        <position position="301"/>
    </location>
    <ligand>
        <name>Ca(2+)</name>
        <dbReference type="ChEBI" id="CHEBI:29108"/>
        <label>2</label>
    </ligand>
</feature>
<feature type="glycosylation site" description="N-linked (GlcNAc...) asparagine; by host" evidence="1">
    <location>
        <position position="69"/>
    </location>
</feature>
<feature type="disulfide bond" evidence="2">
    <location>
        <begin position="82"/>
        <end position="135"/>
    </location>
</feature>
<feature type="disulfide bond" evidence="2">
    <location>
        <begin position="165"/>
        <end position="249"/>
    </location>
</feature>
<feature type="disulfide bond" evidence="2">
    <location>
        <begin position="191"/>
        <end position="244"/>
    </location>
</feature>
<feature type="disulfide bond" evidence="2">
    <location>
        <begin position="196"/>
        <end position="207"/>
    </location>
</feature>
<feature type="splice variant" id="VSP_038638" description="In isoform 2." evidence="3">
    <location>
        <begin position="1"/>
        <end position="29"/>
    </location>
</feature>
<organism>
    <name type="scientific">Rotavirus A (strain RVA/Pig/United States/OSU/1977/G5P9[7])</name>
    <name type="common">RV-A</name>
    <name type="synonym">Rotavirus A (strain Ohio State University)</name>
    <dbReference type="NCBI Taxonomy" id="10915"/>
    <lineage>
        <taxon>Viruses</taxon>
        <taxon>Riboviria</taxon>
        <taxon>Orthornavirae</taxon>
        <taxon>Duplornaviricota</taxon>
        <taxon>Resentoviricetes</taxon>
        <taxon>Reovirales</taxon>
        <taxon>Sedoreoviridae</taxon>
        <taxon>Rotavirus</taxon>
        <taxon>Rotavirus A</taxon>
    </lineage>
</organism>
<proteinExistence type="inferred from homology"/>
<protein>
    <recommendedName>
        <fullName evidence="2">Outer capsid glycoprotein VP7</fullName>
    </recommendedName>
</protein>